<name>EFG_CLASE</name>
<protein>
    <recommendedName>
        <fullName evidence="1">Elongation factor G</fullName>
        <shortName evidence="1">EF-G</shortName>
    </recommendedName>
</protein>
<evidence type="ECO:0000255" key="1">
    <source>
        <dbReference type="HAMAP-Rule" id="MF_00054"/>
    </source>
</evidence>
<feature type="chain" id="PRO_0000335838" description="Elongation factor G">
    <location>
        <begin position="1"/>
        <end position="704"/>
    </location>
</feature>
<feature type="domain" description="tr-type G">
    <location>
        <begin position="10"/>
        <end position="290"/>
    </location>
</feature>
<feature type="binding site" evidence="1">
    <location>
        <begin position="19"/>
        <end position="26"/>
    </location>
    <ligand>
        <name>GTP</name>
        <dbReference type="ChEBI" id="CHEBI:37565"/>
    </ligand>
</feature>
<feature type="binding site" evidence="1">
    <location>
        <begin position="83"/>
        <end position="87"/>
    </location>
    <ligand>
        <name>GTP</name>
        <dbReference type="ChEBI" id="CHEBI:37565"/>
    </ligand>
</feature>
<feature type="binding site" evidence="1">
    <location>
        <begin position="137"/>
        <end position="140"/>
    </location>
    <ligand>
        <name>GTP</name>
        <dbReference type="ChEBI" id="CHEBI:37565"/>
    </ligand>
</feature>
<gene>
    <name evidence="1" type="primary">fusA</name>
    <name type="ordered locus">CMS0279</name>
</gene>
<reference key="1">
    <citation type="journal article" date="2008" name="J. Bacteriol.">
        <title>Genome of the actinomycete plant pathogen Clavibacter michiganensis subsp. sepedonicus suggests recent niche adaptation.</title>
        <authorList>
            <person name="Bentley S.D."/>
            <person name="Corton C."/>
            <person name="Brown S.E."/>
            <person name="Barron A."/>
            <person name="Clark L."/>
            <person name="Doggett J."/>
            <person name="Harris B."/>
            <person name="Ormond D."/>
            <person name="Quail M.A."/>
            <person name="May G."/>
            <person name="Francis D."/>
            <person name="Knudson D."/>
            <person name="Parkhill J."/>
            <person name="Ishimaru C.A."/>
        </authorList>
    </citation>
    <scope>NUCLEOTIDE SEQUENCE [LARGE SCALE GENOMIC DNA]</scope>
    <source>
        <strain>ATCC 33113 / DSM 20744 / JCM 9667 / LMG 2889 / ICMP 2535 / C-1</strain>
    </source>
</reference>
<organism>
    <name type="scientific">Clavibacter sepedonicus</name>
    <name type="common">Clavibacter michiganensis subsp. sepedonicus</name>
    <dbReference type="NCBI Taxonomy" id="31964"/>
    <lineage>
        <taxon>Bacteria</taxon>
        <taxon>Bacillati</taxon>
        <taxon>Actinomycetota</taxon>
        <taxon>Actinomycetes</taxon>
        <taxon>Micrococcales</taxon>
        <taxon>Microbacteriaceae</taxon>
        <taxon>Clavibacter</taxon>
    </lineage>
</organism>
<dbReference type="EMBL" id="AM849034">
    <property type="protein sequence ID" value="CAQ00400.1"/>
    <property type="molecule type" value="Genomic_DNA"/>
</dbReference>
<dbReference type="RefSeq" id="WP_012297751.1">
    <property type="nucleotide sequence ID" value="NZ_MZMN01000003.1"/>
</dbReference>
<dbReference type="SMR" id="B0RB35"/>
<dbReference type="STRING" id="31964.CMS0279"/>
<dbReference type="KEGG" id="cms:CMS0279"/>
<dbReference type="eggNOG" id="COG0480">
    <property type="taxonomic scope" value="Bacteria"/>
</dbReference>
<dbReference type="HOGENOM" id="CLU_002794_4_1_11"/>
<dbReference type="OrthoDB" id="9801472at2"/>
<dbReference type="Proteomes" id="UP000001318">
    <property type="component" value="Chromosome"/>
</dbReference>
<dbReference type="GO" id="GO:0005737">
    <property type="term" value="C:cytoplasm"/>
    <property type="evidence" value="ECO:0007669"/>
    <property type="project" value="UniProtKB-SubCell"/>
</dbReference>
<dbReference type="GO" id="GO:0005525">
    <property type="term" value="F:GTP binding"/>
    <property type="evidence" value="ECO:0007669"/>
    <property type="project" value="UniProtKB-UniRule"/>
</dbReference>
<dbReference type="GO" id="GO:0003924">
    <property type="term" value="F:GTPase activity"/>
    <property type="evidence" value="ECO:0007669"/>
    <property type="project" value="InterPro"/>
</dbReference>
<dbReference type="GO" id="GO:0003746">
    <property type="term" value="F:translation elongation factor activity"/>
    <property type="evidence" value="ECO:0007669"/>
    <property type="project" value="UniProtKB-UniRule"/>
</dbReference>
<dbReference type="GO" id="GO:0032790">
    <property type="term" value="P:ribosome disassembly"/>
    <property type="evidence" value="ECO:0007669"/>
    <property type="project" value="TreeGrafter"/>
</dbReference>
<dbReference type="CDD" id="cd01886">
    <property type="entry name" value="EF-G"/>
    <property type="match status" value="1"/>
</dbReference>
<dbReference type="CDD" id="cd16262">
    <property type="entry name" value="EFG_III"/>
    <property type="match status" value="1"/>
</dbReference>
<dbReference type="CDD" id="cd01434">
    <property type="entry name" value="EFG_mtEFG1_IV"/>
    <property type="match status" value="1"/>
</dbReference>
<dbReference type="CDD" id="cd03713">
    <property type="entry name" value="EFG_mtEFG_C"/>
    <property type="match status" value="1"/>
</dbReference>
<dbReference type="CDD" id="cd04088">
    <property type="entry name" value="EFG_mtEFG_II"/>
    <property type="match status" value="1"/>
</dbReference>
<dbReference type="FunFam" id="2.40.30.10:FF:000006">
    <property type="entry name" value="Elongation factor G"/>
    <property type="match status" value="1"/>
</dbReference>
<dbReference type="FunFam" id="3.30.230.10:FF:000003">
    <property type="entry name" value="Elongation factor G"/>
    <property type="match status" value="1"/>
</dbReference>
<dbReference type="FunFam" id="3.30.70.240:FF:000001">
    <property type="entry name" value="Elongation factor G"/>
    <property type="match status" value="1"/>
</dbReference>
<dbReference type="FunFam" id="3.30.70.870:FF:000001">
    <property type="entry name" value="Elongation factor G"/>
    <property type="match status" value="1"/>
</dbReference>
<dbReference type="FunFam" id="3.40.50.300:FF:000029">
    <property type="entry name" value="Elongation factor G"/>
    <property type="match status" value="1"/>
</dbReference>
<dbReference type="Gene3D" id="3.30.230.10">
    <property type="match status" value="1"/>
</dbReference>
<dbReference type="Gene3D" id="3.30.70.240">
    <property type="match status" value="1"/>
</dbReference>
<dbReference type="Gene3D" id="3.30.70.870">
    <property type="entry name" value="Elongation Factor G (Translational Gtpase), domain 3"/>
    <property type="match status" value="1"/>
</dbReference>
<dbReference type="Gene3D" id="3.40.50.300">
    <property type="entry name" value="P-loop containing nucleotide triphosphate hydrolases"/>
    <property type="match status" value="1"/>
</dbReference>
<dbReference type="Gene3D" id="2.40.30.10">
    <property type="entry name" value="Translation factors"/>
    <property type="match status" value="1"/>
</dbReference>
<dbReference type="HAMAP" id="MF_00054_B">
    <property type="entry name" value="EF_G_EF_2_B"/>
    <property type="match status" value="1"/>
</dbReference>
<dbReference type="InterPro" id="IPR041095">
    <property type="entry name" value="EFG_II"/>
</dbReference>
<dbReference type="InterPro" id="IPR009022">
    <property type="entry name" value="EFG_III"/>
</dbReference>
<dbReference type="InterPro" id="IPR035647">
    <property type="entry name" value="EFG_III/V"/>
</dbReference>
<dbReference type="InterPro" id="IPR047872">
    <property type="entry name" value="EFG_IV"/>
</dbReference>
<dbReference type="InterPro" id="IPR035649">
    <property type="entry name" value="EFG_V"/>
</dbReference>
<dbReference type="InterPro" id="IPR000640">
    <property type="entry name" value="EFG_V-like"/>
</dbReference>
<dbReference type="InterPro" id="IPR004161">
    <property type="entry name" value="EFTu-like_2"/>
</dbReference>
<dbReference type="InterPro" id="IPR031157">
    <property type="entry name" value="G_TR_CS"/>
</dbReference>
<dbReference type="InterPro" id="IPR027417">
    <property type="entry name" value="P-loop_NTPase"/>
</dbReference>
<dbReference type="InterPro" id="IPR020568">
    <property type="entry name" value="Ribosomal_Su5_D2-typ_SF"/>
</dbReference>
<dbReference type="InterPro" id="IPR014721">
    <property type="entry name" value="Ribsml_uS5_D2-typ_fold_subgr"/>
</dbReference>
<dbReference type="InterPro" id="IPR005225">
    <property type="entry name" value="Small_GTP-bd"/>
</dbReference>
<dbReference type="InterPro" id="IPR000795">
    <property type="entry name" value="T_Tr_GTP-bd_dom"/>
</dbReference>
<dbReference type="InterPro" id="IPR009000">
    <property type="entry name" value="Transl_B-barrel_sf"/>
</dbReference>
<dbReference type="InterPro" id="IPR004540">
    <property type="entry name" value="Transl_elong_EFG/EF2"/>
</dbReference>
<dbReference type="InterPro" id="IPR005517">
    <property type="entry name" value="Transl_elong_EFG/EF2_IV"/>
</dbReference>
<dbReference type="NCBIfam" id="TIGR00484">
    <property type="entry name" value="EF-G"/>
    <property type="match status" value="1"/>
</dbReference>
<dbReference type="NCBIfam" id="NF009381">
    <property type="entry name" value="PRK12740.1-5"/>
    <property type="match status" value="1"/>
</dbReference>
<dbReference type="NCBIfam" id="TIGR00231">
    <property type="entry name" value="small_GTP"/>
    <property type="match status" value="1"/>
</dbReference>
<dbReference type="PANTHER" id="PTHR43261:SF1">
    <property type="entry name" value="RIBOSOME-RELEASING FACTOR 2, MITOCHONDRIAL"/>
    <property type="match status" value="1"/>
</dbReference>
<dbReference type="PANTHER" id="PTHR43261">
    <property type="entry name" value="TRANSLATION ELONGATION FACTOR G-RELATED"/>
    <property type="match status" value="1"/>
</dbReference>
<dbReference type="Pfam" id="PF00679">
    <property type="entry name" value="EFG_C"/>
    <property type="match status" value="1"/>
</dbReference>
<dbReference type="Pfam" id="PF14492">
    <property type="entry name" value="EFG_III"/>
    <property type="match status" value="1"/>
</dbReference>
<dbReference type="Pfam" id="PF03764">
    <property type="entry name" value="EFG_IV"/>
    <property type="match status" value="1"/>
</dbReference>
<dbReference type="Pfam" id="PF00009">
    <property type="entry name" value="GTP_EFTU"/>
    <property type="match status" value="1"/>
</dbReference>
<dbReference type="Pfam" id="PF03144">
    <property type="entry name" value="GTP_EFTU_D2"/>
    <property type="match status" value="1"/>
</dbReference>
<dbReference type="PRINTS" id="PR00315">
    <property type="entry name" value="ELONGATNFCT"/>
</dbReference>
<dbReference type="SMART" id="SM00838">
    <property type="entry name" value="EFG_C"/>
    <property type="match status" value="1"/>
</dbReference>
<dbReference type="SMART" id="SM00889">
    <property type="entry name" value="EFG_IV"/>
    <property type="match status" value="1"/>
</dbReference>
<dbReference type="SUPFAM" id="SSF54980">
    <property type="entry name" value="EF-G C-terminal domain-like"/>
    <property type="match status" value="2"/>
</dbReference>
<dbReference type="SUPFAM" id="SSF52540">
    <property type="entry name" value="P-loop containing nucleoside triphosphate hydrolases"/>
    <property type="match status" value="1"/>
</dbReference>
<dbReference type="SUPFAM" id="SSF54211">
    <property type="entry name" value="Ribosomal protein S5 domain 2-like"/>
    <property type="match status" value="1"/>
</dbReference>
<dbReference type="SUPFAM" id="SSF50447">
    <property type="entry name" value="Translation proteins"/>
    <property type="match status" value="1"/>
</dbReference>
<dbReference type="PROSITE" id="PS00301">
    <property type="entry name" value="G_TR_1"/>
    <property type="match status" value="1"/>
</dbReference>
<dbReference type="PROSITE" id="PS51722">
    <property type="entry name" value="G_TR_2"/>
    <property type="match status" value="1"/>
</dbReference>
<proteinExistence type="inferred from homology"/>
<accession>B0RB35</accession>
<comment type="function">
    <text evidence="1">Catalyzes the GTP-dependent ribosomal translocation step during translation elongation. During this step, the ribosome changes from the pre-translocational (PRE) to the post-translocational (POST) state as the newly formed A-site-bound peptidyl-tRNA and P-site-bound deacylated tRNA move to the P and E sites, respectively. Catalyzes the coordinated movement of the two tRNA molecules, the mRNA and conformational changes in the ribosome.</text>
</comment>
<comment type="subcellular location">
    <subcellularLocation>
        <location evidence="1">Cytoplasm</location>
    </subcellularLocation>
</comment>
<comment type="similarity">
    <text evidence="1">Belongs to the TRAFAC class translation factor GTPase superfamily. Classic translation factor GTPase family. EF-G/EF-2 subfamily.</text>
</comment>
<keyword id="KW-0963">Cytoplasm</keyword>
<keyword id="KW-0251">Elongation factor</keyword>
<keyword id="KW-0342">GTP-binding</keyword>
<keyword id="KW-0547">Nucleotide-binding</keyword>
<keyword id="KW-0648">Protein biosynthesis</keyword>
<sequence>MAQDVLTDLNKVRNIGIMAHIDAGKTTTTERILYYTGITHKIGEVHDGAATMDWMAQEQERGITITSAATTCFWNKNQINIIDTPGHVDFTVEVERSLRVLDGAVAVFDGKEGVEPQSETVWRQADKYDVPRICFVNKMDKLGADFYFTVDTIVNRLGAKPLVIQLPIGAEGGFEGVIDLVEMRALTWRGDSKGDVELGAKYDIEEIPADLKDKADEYRAKLLETVAETDDALLEKYFGGEELTVAEIKAAIRKLTVNSEIYPVLCGSAFKNRGVQPMLDAVIDYLPSPLDVPPMEGHDVRDEEKIIIRKPDSTEPFSALAFKVAVHPFFGRLTYVRVYSGHIASGSQVINSTKGKKERIGKIFQMHSNKENPVDSVTAGHIYAVIGLKDTTTGDTLCDPQDQIVLESMTFPEPVIEVAIEPKTKADQEKLGVAIQKLAEEDPTFRTEQNQETGQTVIKGMGELHLDILVDRMKREFNVEANVGKPQVAYRETIRGTVDKHDFTHKKQTGGSGQFAKIQIKIEPMEVTAEKTYEFDNKVTGGRVPREYIPSVDAGIQDALQVGILAGYPMVGVKATLLDGAAHDVDSSEMAFKIAGSMAFKEAARKAKPVLLEPLMAVEVRTPEEYMGDVIGDLNSRRGQIQAMEDASGVKVITANVPLSEMFGYVGDLRSKTSGRAVYSMSFGSYAEVPKAVADEIVQKNKGE</sequence>